<reference key="1">
    <citation type="submission" date="2006-10" db="EMBL/GenBank/DDBJ databases">
        <authorList>
            <consortium name="NIH - Mammalian Gene Collection (MGC) project"/>
        </authorList>
    </citation>
    <scope>NUCLEOTIDE SEQUENCE [LARGE SCALE MRNA]</scope>
    <source>
        <strain>Hereford</strain>
        <tissue>Fetal pons</tissue>
    </source>
</reference>
<comment type="function">
    <text evidence="1">Component of the Mediator complex, a coactivator involved in the regulated transcription of nearly all RNA polymerase II-dependent genes. Mediator functions as a bridge to convey information from gene-specific regulatory proteins to the basal RNA polymerase II transcription machinery. Mediator is recruited to promoters by direct interactions with regulatory proteins and serves as a scaffold for the assembly of a functional preinitiation complex with RNA polymerase II and the general transcription factors (By similarity).</text>
</comment>
<comment type="subunit">
    <text evidence="1">Component of the Mediator complex, which is composed of MED1, MED4, MED6, MED7, MED8, MED9, MED10, MED11, MED12, MED13, MED13L, MED14, MED15, MED16, MED17, MED18, MED19, MED20, MED21, MED22, MED23, MED24, MED25, MED26, MED27, MED29, MED30, MED31, CCNC, CDK8 and CDC2L6/CDK11. The MED12, MED13, CCNC and CDK8 subunits form a distinct module termed the CDK8 module. Mediator containing the CDK8 module is less active than Mediator lacking this module in supporting transcriptional activation. Individual preparations of the Mediator complex lacking one or more distinct subunits have been variously termed ARC, CRSP, DRIP, PC2, SMCC and TRAP (By similarity).</text>
</comment>
<comment type="subcellular location">
    <subcellularLocation>
        <location evidence="3">Nucleus</location>
    </subcellularLocation>
</comment>
<comment type="similarity">
    <text evidence="3">Belongs to the Mediator complex subunit 31 family.</text>
</comment>
<organism>
    <name type="scientific">Bos taurus</name>
    <name type="common">Bovine</name>
    <dbReference type="NCBI Taxonomy" id="9913"/>
    <lineage>
        <taxon>Eukaryota</taxon>
        <taxon>Metazoa</taxon>
        <taxon>Chordata</taxon>
        <taxon>Craniata</taxon>
        <taxon>Vertebrata</taxon>
        <taxon>Euteleostomi</taxon>
        <taxon>Mammalia</taxon>
        <taxon>Eutheria</taxon>
        <taxon>Laurasiatheria</taxon>
        <taxon>Artiodactyla</taxon>
        <taxon>Ruminantia</taxon>
        <taxon>Pecora</taxon>
        <taxon>Bovidae</taxon>
        <taxon>Bovinae</taxon>
        <taxon>Bos</taxon>
    </lineage>
</organism>
<keyword id="KW-0007">Acetylation</keyword>
<keyword id="KW-0010">Activator</keyword>
<keyword id="KW-0539">Nucleus</keyword>
<keyword id="KW-1185">Reference proteome</keyword>
<keyword id="KW-0804">Transcription</keyword>
<keyword id="KW-0805">Transcription regulation</keyword>
<protein>
    <recommendedName>
        <fullName>Mediator of RNA polymerase II transcription subunit 31</fullName>
    </recommendedName>
    <alternativeName>
        <fullName>Mediator complex subunit 31</fullName>
    </alternativeName>
    <alternativeName>
        <fullName>Mediator complex subunit SOH1</fullName>
    </alternativeName>
</protein>
<accession>A0JNN3</accession>
<sequence>MAAAVAMETDDAGNRLRFQLELEFVQCLANPNYLNFLAQRGYFKDKAFVNYLKYLLYWKEPEYAKYLKYPQCLHMLELLQYEHFRKELVNAQCAKFIDEQQILHWQHYSRKRMRLQQALAEQQQQNNASGK</sequence>
<proteinExistence type="evidence at transcript level"/>
<name>MED31_BOVIN</name>
<evidence type="ECO:0000250" key="1"/>
<evidence type="ECO:0000250" key="2">
    <source>
        <dbReference type="UniProtKB" id="Q9Y3C7"/>
    </source>
</evidence>
<evidence type="ECO:0000305" key="3"/>
<gene>
    <name type="primary">MED31</name>
    <name type="synonym">SOH1</name>
</gene>
<dbReference type="EMBL" id="BC126806">
    <property type="protein sequence ID" value="AAI26807.1"/>
    <property type="molecule type" value="mRNA"/>
</dbReference>
<dbReference type="RefSeq" id="NP_001071457.1">
    <property type="nucleotide sequence ID" value="NM_001077989.2"/>
</dbReference>
<dbReference type="SMR" id="A0JNN3"/>
<dbReference type="FunCoup" id="A0JNN3">
    <property type="interactions" value="4405"/>
</dbReference>
<dbReference type="STRING" id="9913.ENSBTAP00000058364"/>
<dbReference type="PaxDb" id="9913-ENSBTAP00000029148"/>
<dbReference type="GeneID" id="532868"/>
<dbReference type="KEGG" id="bta:532868"/>
<dbReference type="CTD" id="51003"/>
<dbReference type="VEuPathDB" id="HostDB:ENSBTAG00000054943"/>
<dbReference type="eggNOG" id="KOG4086">
    <property type="taxonomic scope" value="Eukaryota"/>
</dbReference>
<dbReference type="HOGENOM" id="CLU_071681_5_1_1"/>
<dbReference type="InParanoid" id="A0JNN3"/>
<dbReference type="OMA" id="QGILNQP"/>
<dbReference type="OrthoDB" id="10257739at2759"/>
<dbReference type="TreeFam" id="TF105799"/>
<dbReference type="Reactome" id="R-BTA-212436">
    <property type="pathway name" value="Generic Transcription Pathway"/>
</dbReference>
<dbReference type="Reactome" id="R-BTA-9841922">
    <property type="pathway name" value="MLL4 and MLL3 complexes regulate expression of PPARG target genes in adipogenesis and hepatic steatosis"/>
</dbReference>
<dbReference type="Proteomes" id="UP000009136">
    <property type="component" value="Chromosome 19"/>
</dbReference>
<dbReference type="Bgee" id="ENSBTAG00000054943">
    <property type="expression patterns" value="Expressed in metanephros cortex and 106 other cell types or tissues"/>
</dbReference>
<dbReference type="GO" id="GO:0070847">
    <property type="term" value="C:core mediator complex"/>
    <property type="evidence" value="ECO:0000318"/>
    <property type="project" value="GO_Central"/>
</dbReference>
<dbReference type="GO" id="GO:0016592">
    <property type="term" value="C:mediator complex"/>
    <property type="evidence" value="ECO:0000318"/>
    <property type="project" value="GO_Central"/>
</dbReference>
<dbReference type="GO" id="GO:0003712">
    <property type="term" value="F:transcription coregulator activity"/>
    <property type="evidence" value="ECO:0007669"/>
    <property type="project" value="InterPro"/>
</dbReference>
<dbReference type="GO" id="GO:0060173">
    <property type="term" value="P:limb development"/>
    <property type="evidence" value="ECO:0007669"/>
    <property type="project" value="Ensembl"/>
</dbReference>
<dbReference type="GO" id="GO:0048147">
    <property type="term" value="P:negative regulation of fibroblast proliferation"/>
    <property type="evidence" value="ECO:0007669"/>
    <property type="project" value="Ensembl"/>
</dbReference>
<dbReference type="GO" id="GO:0006357">
    <property type="term" value="P:regulation of transcription by RNA polymerase II"/>
    <property type="evidence" value="ECO:0000318"/>
    <property type="project" value="GO_Central"/>
</dbReference>
<dbReference type="FunFam" id="1.10.10.1340:FF:000001">
    <property type="entry name" value="Mediator of RNA polymerase II transcription subunit 31"/>
    <property type="match status" value="1"/>
</dbReference>
<dbReference type="Gene3D" id="1.10.10.1340">
    <property type="entry name" value="Mediator of RNA polymerase II, submodule Med31 (Soh1)"/>
    <property type="match status" value="1"/>
</dbReference>
<dbReference type="InterPro" id="IPR038089">
    <property type="entry name" value="Med31_sf"/>
</dbReference>
<dbReference type="InterPro" id="IPR008831">
    <property type="entry name" value="Mediator_Med31"/>
</dbReference>
<dbReference type="PANTHER" id="PTHR13186">
    <property type="entry name" value="MEDIATOR OF RNA POLYMERASE II TRANSCRIPTION SUBUNIT 31"/>
    <property type="match status" value="1"/>
</dbReference>
<dbReference type="Pfam" id="PF05669">
    <property type="entry name" value="Med31"/>
    <property type="match status" value="1"/>
</dbReference>
<feature type="initiator methionine" description="Removed" evidence="2">
    <location>
        <position position="1"/>
    </location>
</feature>
<feature type="chain" id="PRO_0000305707" description="Mediator of RNA polymerase II transcription subunit 31">
    <location>
        <begin position="2"/>
        <end position="131"/>
    </location>
</feature>
<feature type="modified residue" description="N-acetylalanine" evidence="2">
    <location>
        <position position="2"/>
    </location>
</feature>